<feature type="chain" id="PRO_0000181357" description="Sphingosine kinase 1">
    <location>
        <begin position="1"/>
        <end position="384"/>
    </location>
</feature>
<feature type="domain" description="DAGKc" evidence="3">
    <location>
        <begin position="12"/>
        <end position="159"/>
    </location>
</feature>
<feature type="short sequence motif" description="Nuclear export signal 1" evidence="8">
    <location>
        <begin position="147"/>
        <end position="155"/>
    </location>
</feature>
<feature type="short sequence motif" description="Nuclear export signal 2" evidence="8">
    <location>
        <begin position="161"/>
        <end position="169"/>
    </location>
</feature>
<feature type="active site" description="Proton donor/acceptor" evidence="13">
    <location>
        <position position="81"/>
    </location>
</feature>
<feature type="binding site" evidence="13">
    <location>
        <begin position="22"/>
        <end position="24"/>
    </location>
    <ligand>
        <name>ATP</name>
        <dbReference type="ChEBI" id="CHEBI:30616"/>
    </ligand>
</feature>
<feature type="binding site" evidence="13">
    <location>
        <begin position="54"/>
        <end position="58"/>
    </location>
    <ligand>
        <name>ATP</name>
        <dbReference type="ChEBI" id="CHEBI:30616"/>
    </ligand>
</feature>
<feature type="binding site" evidence="13">
    <location>
        <begin position="79"/>
        <end position="82"/>
    </location>
    <ligand>
        <name>substrate</name>
    </ligand>
</feature>
<feature type="binding site" evidence="13">
    <location>
        <position position="86"/>
    </location>
    <ligand>
        <name>ATP</name>
        <dbReference type="ChEBI" id="CHEBI:30616"/>
    </ligand>
</feature>
<feature type="binding site" evidence="13">
    <location>
        <begin position="111"/>
        <end position="113"/>
    </location>
    <ligand>
        <name>ATP</name>
        <dbReference type="ChEBI" id="CHEBI:30616"/>
    </ligand>
</feature>
<feature type="binding site" evidence="13">
    <location>
        <position position="178"/>
    </location>
    <ligand>
        <name>substrate</name>
    </ligand>
</feature>
<feature type="binding site" evidence="13">
    <location>
        <position position="185"/>
    </location>
    <ligand>
        <name>ATP</name>
        <dbReference type="ChEBI" id="CHEBI:30616"/>
    </ligand>
</feature>
<feature type="binding site" evidence="13">
    <location>
        <position position="191"/>
    </location>
    <ligand>
        <name>ATP</name>
        <dbReference type="ChEBI" id="CHEBI:30616"/>
    </ligand>
</feature>
<feature type="binding site" evidence="13">
    <location>
        <begin position="341"/>
        <end position="343"/>
    </location>
    <ligand>
        <name>ATP</name>
        <dbReference type="ChEBI" id="CHEBI:30616"/>
    </ligand>
</feature>
<feature type="modified residue" description="Phosphothreonine" evidence="24">
    <location>
        <position position="193"/>
    </location>
</feature>
<feature type="modified residue" description="Phosphoserine" evidence="12">
    <location>
        <position position="225"/>
    </location>
</feature>
<feature type="splice variant" id="VSP_035453" description="In isoform 2." evidence="19 20">
    <original>M</original>
    <variation>MSAQVLGFLRSWTPLPLAAPRGPAAAGNDAGAPAATAPGGEGEPHSRPCDARLGSTDKELKAGAAATGSAPTAPGTPWQREPRVEVM</variation>
    <location>
        <position position="1"/>
    </location>
</feature>
<feature type="splice variant" id="VSP_047078" description="In isoform 3." evidence="20">
    <original>P</original>
    <variation>PVVGCGRGLFGFVFS</variation>
    <location>
        <position position="3"/>
    </location>
</feature>
<feature type="mutagenesis site" description="Loss of enzyme activity." evidence="13">
    <original>D</original>
    <variation>A</variation>
    <location>
        <position position="81"/>
    </location>
</feature>
<feature type="mutagenesis site" description="Strongly reduced enzyme activity." evidence="13">
    <original>D</original>
    <variation>N</variation>
    <location>
        <position position="81"/>
    </location>
</feature>
<feature type="mutagenesis site" description="Loss of enzyme activity." evidence="12">
    <original>G</original>
    <variation>D</variation>
    <location>
        <position position="82"/>
    </location>
</feature>
<feature type="mutagenesis site" description="Loss of binding to negatively charged membranes, diffuse cytosolic distribution." evidence="15">
    <original>L</original>
    <variation>Q</variation>
    <location>
        <position position="194"/>
    </location>
</feature>
<feature type="mutagenesis site" description="Abolishes interaction with CIB1." evidence="11">
    <original>FL</original>
    <variation>AA</variation>
    <location>
        <begin position="197"/>
        <end position="198"/>
    </location>
</feature>
<feature type="mutagenesis site" description="Loss of binding to negatively charged membranes, diffuse cytosolic distribution." evidence="15">
    <original>FL</original>
    <variation>AQ</variation>
    <location>
        <begin position="197"/>
        <end position="198"/>
    </location>
</feature>
<feature type="sequence conflict" description="In Ref. 4; CAB92131." evidence="22" ref="4">
    <location>
        <position position="6"/>
    </location>
</feature>
<feature type="sequence conflict" description="In Ref. 4; CAB92131." evidence="22" ref="4">
    <original>LPRPC</original>
    <variation>ARL</variation>
    <location>
        <begin position="11"/>
        <end position="15"/>
    </location>
</feature>
<feature type="sequence conflict" description="In Ref. 4; CAB92131." evidence="22" ref="4">
    <original>NA</original>
    <variation>KP</variation>
    <location>
        <begin position="114"/>
        <end position="115"/>
    </location>
</feature>
<feature type="sequence conflict" description="In Ref. 2; AAF73423." evidence="22" ref="2">
    <original>V</original>
    <variation>M</variation>
    <location>
        <position position="251"/>
    </location>
</feature>
<feature type="sequence conflict" description="In Ref. 2; AAF73423." evidence="22" ref="2">
    <original>V</original>
    <variation>I</variation>
    <location>
        <position position="260"/>
    </location>
</feature>
<feature type="sequence conflict" description="In Ref. 2; AAF73423." evidence="22" ref="2">
    <original>L</original>
    <variation>F</variation>
    <location>
        <position position="302"/>
    </location>
</feature>
<feature type="sequence conflict" description="In Ref. 4; CAB92131." evidence="22" ref="4">
    <original>V</original>
    <variation>G</variation>
    <location>
        <position position="325"/>
    </location>
</feature>
<feature type="sequence conflict" description="In Ref. 3; AAG01980." evidence="22" ref="3">
    <original>V</original>
    <variation>M</variation>
    <location>
        <position position="337"/>
    </location>
</feature>
<feature type="strand" evidence="26">
    <location>
        <begin position="13"/>
        <end position="21"/>
    </location>
</feature>
<feature type="turn" evidence="26">
    <location>
        <begin position="26"/>
        <end position="29"/>
    </location>
</feature>
<feature type="helix" evidence="26">
    <location>
        <begin position="30"/>
        <end position="37"/>
    </location>
</feature>
<feature type="helix" evidence="26">
    <location>
        <begin position="39"/>
        <end position="44"/>
    </location>
</feature>
<feature type="strand" evidence="26">
    <location>
        <begin position="47"/>
        <end position="53"/>
    </location>
</feature>
<feature type="helix" evidence="26">
    <location>
        <begin position="59"/>
        <end position="66"/>
    </location>
</feature>
<feature type="helix" evidence="25">
    <location>
        <begin position="69"/>
        <end position="71"/>
    </location>
</feature>
<feature type="strand" evidence="26">
    <location>
        <begin position="73"/>
        <end position="80"/>
    </location>
</feature>
<feature type="helix" evidence="26">
    <location>
        <begin position="81"/>
        <end position="92"/>
    </location>
</feature>
<feature type="helix" evidence="26">
    <location>
        <begin position="97"/>
        <end position="100"/>
    </location>
</feature>
<feature type="strand" evidence="26">
    <location>
        <begin position="105"/>
        <end position="109"/>
    </location>
</feature>
<feature type="helix" evidence="26">
    <location>
        <begin position="115"/>
        <end position="123"/>
    </location>
</feature>
<feature type="helix" evidence="26">
    <location>
        <begin position="131"/>
        <end position="144"/>
    </location>
</feature>
<feature type="strand" evidence="26">
    <location>
        <begin position="146"/>
        <end position="157"/>
    </location>
</feature>
<feature type="strand" evidence="26">
    <location>
        <begin position="162"/>
        <end position="172"/>
    </location>
</feature>
<feature type="helix" evidence="26">
    <location>
        <begin position="173"/>
        <end position="181"/>
    </location>
</feature>
<feature type="helix" evidence="26">
    <location>
        <begin position="182"/>
        <end position="190"/>
    </location>
</feature>
<feature type="helix" evidence="26">
    <location>
        <begin position="191"/>
        <end position="201"/>
    </location>
</feature>
<feature type="strand" evidence="26">
    <location>
        <begin position="206"/>
        <end position="214"/>
    </location>
</feature>
<feature type="helix" evidence="26">
    <location>
        <begin position="215"/>
        <end position="218"/>
    </location>
</feature>
<feature type="strand" evidence="25">
    <location>
        <begin position="230"/>
        <end position="232"/>
    </location>
</feature>
<feature type="strand" evidence="26">
    <location>
        <begin position="249"/>
        <end position="251"/>
    </location>
</feature>
<feature type="strand" evidence="26">
    <location>
        <begin position="255"/>
        <end position="266"/>
    </location>
</feature>
<feature type="strand" evidence="26">
    <location>
        <begin position="285"/>
        <end position="291"/>
    </location>
</feature>
<feature type="helix" evidence="26">
    <location>
        <begin position="296"/>
        <end position="305"/>
    </location>
</feature>
<feature type="helix" evidence="26">
    <location>
        <begin position="306"/>
        <end position="308"/>
    </location>
</feature>
<feature type="helix" evidence="26">
    <location>
        <begin position="311"/>
        <end position="314"/>
    </location>
</feature>
<feature type="strand" evidence="26">
    <location>
        <begin position="319"/>
        <end position="331"/>
    </location>
</feature>
<feature type="strand" evidence="26">
    <location>
        <begin position="333"/>
        <end position="335"/>
    </location>
</feature>
<feature type="strand" evidence="26">
    <location>
        <begin position="337"/>
        <end position="340"/>
    </location>
</feature>
<feature type="strand" evidence="26">
    <location>
        <begin position="343"/>
        <end position="346"/>
    </location>
</feature>
<feature type="strand" evidence="26">
    <location>
        <begin position="350"/>
        <end position="362"/>
    </location>
</feature>
<feature type="sequence variant" id="VAR_082919" description="In dbSNP:rs346803." evidence="22">
    <original>A</original>
    <variation>T</variation>
    <location sequence="Q9NYA1-2">
        <position position="34"/>
    </location>
</feature>
<dbReference type="EC" id="2.7.1.91" evidence="4 12 13 15"/>
<dbReference type="EC" id="2.3.1.-"/>
<dbReference type="EMBL" id="AF266756">
    <property type="protein sequence ID" value="AAF73470.1"/>
    <property type="molecule type" value="mRNA"/>
</dbReference>
<dbReference type="EMBL" id="AF238083">
    <property type="protein sequence ID" value="AAF73423.1"/>
    <property type="molecule type" value="mRNA"/>
</dbReference>
<dbReference type="EMBL" id="AF200328">
    <property type="protein sequence ID" value="AAG01980.1"/>
    <property type="molecule type" value="mRNA"/>
</dbReference>
<dbReference type="EMBL" id="AK023393">
    <property type="protein sequence ID" value="BAB14558.1"/>
    <property type="molecule type" value="mRNA"/>
</dbReference>
<dbReference type="EMBL" id="AK292294">
    <property type="protein sequence ID" value="BAF84983.1"/>
    <property type="molecule type" value="mRNA"/>
</dbReference>
<dbReference type="EMBL" id="AK022402">
    <property type="protein sequence ID" value="BAB14028.1"/>
    <property type="molecule type" value="mRNA"/>
</dbReference>
<dbReference type="EMBL" id="AJ245504">
    <property type="protein sequence ID" value="CAB92131.1"/>
    <property type="molecule type" value="mRNA"/>
</dbReference>
<dbReference type="EMBL" id="AC090699">
    <property type="status" value="NOT_ANNOTATED_CDS"/>
    <property type="molecule type" value="Genomic_DNA"/>
</dbReference>
<dbReference type="EMBL" id="CH471099">
    <property type="protein sequence ID" value="EAW89392.1"/>
    <property type="molecule type" value="Genomic_DNA"/>
</dbReference>
<dbReference type="EMBL" id="CH471099">
    <property type="protein sequence ID" value="EAW89393.1"/>
    <property type="molecule type" value="Genomic_DNA"/>
</dbReference>
<dbReference type="EMBL" id="BC009419">
    <property type="protein sequence ID" value="AAH09419.1"/>
    <property type="molecule type" value="mRNA"/>
</dbReference>
<dbReference type="EMBL" id="BC014439">
    <property type="protein sequence ID" value="AAH14439.1"/>
    <property type="molecule type" value="mRNA"/>
</dbReference>
<dbReference type="EMBL" id="BC030553">
    <property type="protein sequence ID" value="AAH30553.1"/>
    <property type="molecule type" value="mRNA"/>
</dbReference>
<dbReference type="CCDS" id="CCDS11744.1">
    <molecule id="Q9NYA1-2"/>
</dbReference>
<dbReference type="CCDS" id="CCDS45785.1">
    <molecule id="Q9NYA1-1"/>
</dbReference>
<dbReference type="CCDS" id="CCDS59297.1">
    <molecule id="Q9NYA1-3"/>
</dbReference>
<dbReference type="RefSeq" id="NP_001136073.1">
    <molecule id="Q9NYA1-1"/>
    <property type="nucleotide sequence ID" value="NM_001142601.2"/>
</dbReference>
<dbReference type="RefSeq" id="NP_001136074.1">
    <molecule id="Q9NYA1-1"/>
    <property type="nucleotide sequence ID" value="NM_001142602.2"/>
</dbReference>
<dbReference type="RefSeq" id="NP_001342068.1">
    <molecule id="Q9NYA1-1"/>
    <property type="nucleotide sequence ID" value="NM_001355139.2"/>
</dbReference>
<dbReference type="RefSeq" id="NP_068807.2">
    <molecule id="Q9NYA1-3"/>
    <property type="nucleotide sequence ID" value="NM_021972.3"/>
</dbReference>
<dbReference type="RefSeq" id="NP_892010.2">
    <molecule id="Q9NYA1-2"/>
    <property type="nucleotide sequence ID" value="NM_182965.3"/>
</dbReference>
<dbReference type="RefSeq" id="XP_005257823.1">
    <property type="nucleotide sequence ID" value="XM_005257766.2"/>
</dbReference>
<dbReference type="PDB" id="3VZB">
    <property type="method" value="X-ray"/>
    <property type="resolution" value="2.00 A"/>
    <property type="chains" value="A/B/C=9-364"/>
</dbReference>
<dbReference type="PDB" id="3VZC">
    <property type="method" value="X-ray"/>
    <property type="resolution" value="2.30 A"/>
    <property type="chains" value="A/B/C/D/E/F=9-364"/>
</dbReference>
<dbReference type="PDB" id="3VZD">
    <property type="method" value="X-ray"/>
    <property type="resolution" value="2.30 A"/>
    <property type="chains" value="A/B/C/D/E/F=9-364"/>
</dbReference>
<dbReference type="PDB" id="4L02">
    <property type="method" value="X-ray"/>
    <property type="resolution" value="2.75 A"/>
    <property type="chains" value="A/B/C=9-364"/>
</dbReference>
<dbReference type="PDB" id="4V24">
    <property type="method" value="X-ray"/>
    <property type="resolution" value="1.80 A"/>
    <property type="chains" value="A/B=1-363"/>
</dbReference>
<dbReference type="PDBsum" id="3VZB"/>
<dbReference type="PDBsum" id="3VZC"/>
<dbReference type="PDBsum" id="3VZD"/>
<dbReference type="PDBsum" id="4L02"/>
<dbReference type="PDBsum" id="4V24"/>
<dbReference type="SMR" id="Q9NYA1"/>
<dbReference type="BioGRID" id="114396">
    <property type="interactions" value="52"/>
</dbReference>
<dbReference type="FunCoup" id="Q9NYA1">
    <property type="interactions" value="1146"/>
</dbReference>
<dbReference type="IntAct" id="Q9NYA1">
    <property type="interactions" value="80"/>
</dbReference>
<dbReference type="MINT" id="Q9NYA1"/>
<dbReference type="STRING" id="9606.ENSP00000313681"/>
<dbReference type="BindingDB" id="Q9NYA1"/>
<dbReference type="ChEMBL" id="CHEMBL4394"/>
<dbReference type="DrugBank" id="DB08868">
    <property type="generic name" value="Fingolimod"/>
</dbReference>
<dbReference type="DrugBank" id="DB04915">
    <property type="generic name" value="Idronoxil"/>
</dbReference>
<dbReference type="GuidetoPHARMACOLOGY" id="2204"/>
<dbReference type="SwissLipids" id="SLP:000000111"/>
<dbReference type="iPTMnet" id="Q9NYA1"/>
<dbReference type="PhosphoSitePlus" id="Q9NYA1"/>
<dbReference type="BioMuta" id="SPHK1"/>
<dbReference type="DMDM" id="17369329"/>
<dbReference type="jPOST" id="Q9NYA1"/>
<dbReference type="MassIVE" id="Q9NYA1"/>
<dbReference type="PaxDb" id="9606-ENSP00000313681"/>
<dbReference type="PeptideAtlas" id="Q9NYA1"/>
<dbReference type="ProteomicsDB" id="83202">
    <molecule id="Q9NYA1-1"/>
</dbReference>
<dbReference type="ProteomicsDB" id="83203">
    <molecule id="Q9NYA1-2"/>
</dbReference>
<dbReference type="Pumba" id="Q9NYA1"/>
<dbReference type="Antibodypedia" id="19687">
    <property type="antibodies" value="758 antibodies from 48 providers"/>
</dbReference>
<dbReference type="DNASU" id="8877"/>
<dbReference type="Ensembl" id="ENST00000323374.8">
    <molecule id="Q9NYA1-2"/>
    <property type="protein sequence ID" value="ENSP00000313681.3"/>
    <property type="gene ID" value="ENSG00000176170.14"/>
</dbReference>
<dbReference type="Ensembl" id="ENST00000392496.3">
    <molecule id="Q9NYA1-1"/>
    <property type="protein sequence ID" value="ENSP00000376285.2"/>
    <property type="gene ID" value="ENSG00000176170.14"/>
</dbReference>
<dbReference type="Ensembl" id="ENST00000545180.5">
    <molecule id="Q9NYA1-1"/>
    <property type="protein sequence ID" value="ENSP00000440970.1"/>
    <property type="gene ID" value="ENSG00000176170.14"/>
</dbReference>
<dbReference type="Ensembl" id="ENST00000590959.5">
    <molecule id="Q9NYA1-3"/>
    <property type="protein sequence ID" value="ENSP00000468547.1"/>
    <property type="gene ID" value="ENSG00000176170.14"/>
</dbReference>
<dbReference type="Ensembl" id="ENST00000592299.6">
    <molecule id="Q9NYA1-1"/>
    <property type="protein sequence ID" value="ENSP00000465726.2"/>
    <property type="gene ID" value="ENSG00000176170.14"/>
</dbReference>
<dbReference type="GeneID" id="8877"/>
<dbReference type="KEGG" id="hsa:8877"/>
<dbReference type="MANE-Select" id="ENST00000592299.6">
    <property type="protein sequence ID" value="ENSP00000465726.2"/>
    <property type="RefSeq nucleotide sequence ID" value="NM_001142601.2"/>
    <property type="RefSeq protein sequence ID" value="NP_001136073.1"/>
</dbReference>
<dbReference type="UCSC" id="uc002jrf.1">
    <molecule id="Q9NYA1-1"/>
    <property type="organism name" value="human"/>
</dbReference>
<dbReference type="AGR" id="HGNC:11240"/>
<dbReference type="CTD" id="8877"/>
<dbReference type="DisGeNET" id="8877"/>
<dbReference type="GeneCards" id="SPHK1"/>
<dbReference type="HGNC" id="HGNC:11240">
    <property type="gene designation" value="SPHK1"/>
</dbReference>
<dbReference type="HPA" id="ENSG00000176170">
    <property type="expression patterns" value="Low tissue specificity"/>
</dbReference>
<dbReference type="MIM" id="603730">
    <property type="type" value="gene"/>
</dbReference>
<dbReference type="neXtProt" id="NX_Q9NYA1"/>
<dbReference type="OpenTargets" id="ENSG00000176170"/>
<dbReference type="PharmGKB" id="PA36070"/>
<dbReference type="VEuPathDB" id="HostDB:ENSG00000176170"/>
<dbReference type="eggNOG" id="KOG1116">
    <property type="taxonomic scope" value="Eukaryota"/>
</dbReference>
<dbReference type="GeneTree" id="ENSGT00940000157864"/>
<dbReference type="HOGENOM" id="CLU_013399_1_0_1"/>
<dbReference type="InParanoid" id="Q9NYA1"/>
<dbReference type="OMA" id="TMGNFYA"/>
<dbReference type="OrthoDB" id="3853857at2759"/>
<dbReference type="PAN-GO" id="Q9NYA1">
    <property type="GO annotations" value="9 GO annotations based on evolutionary models"/>
</dbReference>
<dbReference type="PhylomeDB" id="Q9NYA1"/>
<dbReference type="TreeFam" id="TF354296"/>
<dbReference type="BRENDA" id="2.7.1.91">
    <property type="organism ID" value="2681"/>
</dbReference>
<dbReference type="PathwayCommons" id="Q9NYA1"/>
<dbReference type="Reactome" id="R-HSA-1660661">
    <property type="pathway name" value="Sphingolipid de novo biosynthesis"/>
</dbReference>
<dbReference type="Reactome" id="R-HSA-390471">
    <property type="pathway name" value="Association of TriC/CCT with target proteins during biosynthesis"/>
</dbReference>
<dbReference type="Reactome" id="R-HSA-5218921">
    <property type="pathway name" value="VEGFR2 mediated cell proliferation"/>
</dbReference>
<dbReference type="Reactome" id="R-HSA-9009391">
    <property type="pathway name" value="Extra-nuclear estrogen signaling"/>
</dbReference>
<dbReference type="Reactome" id="R-HSA-9833482">
    <property type="pathway name" value="PKR-mediated signaling"/>
</dbReference>
<dbReference type="SABIO-RK" id="Q9NYA1"/>
<dbReference type="SignaLink" id="Q9NYA1"/>
<dbReference type="SIGNOR" id="Q9NYA1"/>
<dbReference type="BioGRID-ORCS" id="8877">
    <property type="hits" value="19 hits in 1163 CRISPR screens"/>
</dbReference>
<dbReference type="CD-CODE" id="8C2F96ED">
    <property type="entry name" value="Centrosome"/>
</dbReference>
<dbReference type="ChiTaRS" id="SPHK1">
    <property type="organism name" value="human"/>
</dbReference>
<dbReference type="EvolutionaryTrace" id="Q9NYA1"/>
<dbReference type="GeneWiki" id="Sphingosine_kinase_1"/>
<dbReference type="GenomeRNAi" id="8877"/>
<dbReference type="Pharos" id="Q9NYA1">
    <property type="development level" value="Tchem"/>
</dbReference>
<dbReference type="PRO" id="PR:Q9NYA1"/>
<dbReference type="Proteomes" id="UP000005640">
    <property type="component" value="Chromosome 17"/>
</dbReference>
<dbReference type="RNAct" id="Q9NYA1">
    <property type="molecule type" value="protein"/>
</dbReference>
<dbReference type="Bgee" id="ENSG00000176170">
    <property type="expression patterns" value="Expressed in stromal cell of endometrium and 134 other cell types or tissues"/>
</dbReference>
<dbReference type="ExpressionAtlas" id="Q9NYA1">
    <property type="expression patterns" value="baseline and differential"/>
</dbReference>
<dbReference type="GO" id="GO:0005929">
    <property type="term" value="C:cilium"/>
    <property type="evidence" value="ECO:0000314"/>
    <property type="project" value="HPA"/>
</dbReference>
<dbReference type="GO" id="GO:0005905">
    <property type="term" value="C:clathrin-coated pit"/>
    <property type="evidence" value="ECO:0000314"/>
    <property type="project" value="UniProtKB"/>
</dbReference>
<dbReference type="GO" id="GO:0005737">
    <property type="term" value="C:cytoplasm"/>
    <property type="evidence" value="ECO:0000314"/>
    <property type="project" value="UniProtKB"/>
</dbReference>
<dbReference type="GO" id="GO:0005829">
    <property type="term" value="C:cytosol"/>
    <property type="evidence" value="ECO:0000304"/>
    <property type="project" value="UniProtKB"/>
</dbReference>
<dbReference type="GO" id="GO:0031901">
    <property type="term" value="C:early endosome membrane"/>
    <property type="evidence" value="ECO:0000314"/>
    <property type="project" value="UniProtKB"/>
</dbReference>
<dbReference type="GO" id="GO:0030139">
    <property type="term" value="C:endocytic vesicle"/>
    <property type="evidence" value="ECO:0000250"/>
    <property type="project" value="UniProtKB"/>
</dbReference>
<dbReference type="GO" id="GO:0043231">
    <property type="term" value="C:intracellular membrane-bounded organelle"/>
    <property type="evidence" value="ECO:0000314"/>
    <property type="project" value="HPA"/>
</dbReference>
<dbReference type="GO" id="GO:0016020">
    <property type="term" value="C:membrane"/>
    <property type="evidence" value="ECO:0000318"/>
    <property type="project" value="GO_Central"/>
</dbReference>
<dbReference type="GO" id="GO:0005654">
    <property type="term" value="C:nucleoplasm"/>
    <property type="evidence" value="ECO:0000304"/>
    <property type="project" value="Reactome"/>
</dbReference>
<dbReference type="GO" id="GO:0005634">
    <property type="term" value="C:nucleus"/>
    <property type="evidence" value="ECO:0000250"/>
    <property type="project" value="UniProtKB"/>
</dbReference>
<dbReference type="GO" id="GO:0005886">
    <property type="term" value="C:plasma membrane"/>
    <property type="evidence" value="ECO:0000314"/>
    <property type="project" value="HPA"/>
</dbReference>
<dbReference type="GO" id="GO:0098793">
    <property type="term" value="C:presynapse"/>
    <property type="evidence" value="ECO:0000314"/>
    <property type="project" value="SynGO"/>
</dbReference>
<dbReference type="GO" id="GO:0016407">
    <property type="term" value="F:acetyltransferase activity"/>
    <property type="evidence" value="ECO:0000250"/>
    <property type="project" value="UniProtKB"/>
</dbReference>
<dbReference type="GO" id="GO:0005524">
    <property type="term" value="F:ATP binding"/>
    <property type="evidence" value="ECO:0000314"/>
    <property type="project" value="UniProtKB"/>
</dbReference>
<dbReference type="GO" id="GO:0005516">
    <property type="term" value="F:calmodulin binding"/>
    <property type="evidence" value="ECO:0000314"/>
    <property type="project" value="UniProtKB"/>
</dbReference>
<dbReference type="GO" id="GO:0017050">
    <property type="term" value="F:D-erythro-sphingosine kinase activity"/>
    <property type="evidence" value="ECO:0000314"/>
    <property type="project" value="UniProtKB"/>
</dbReference>
<dbReference type="GO" id="GO:0003677">
    <property type="term" value="F:DNA binding"/>
    <property type="evidence" value="ECO:0000314"/>
    <property type="project" value="MGI"/>
</dbReference>
<dbReference type="GO" id="GO:0008289">
    <property type="term" value="F:lipid binding"/>
    <property type="evidence" value="ECO:0000314"/>
    <property type="project" value="UniProtKB"/>
</dbReference>
<dbReference type="GO" id="GO:0001727">
    <property type="term" value="F:lipid kinase activity"/>
    <property type="evidence" value="ECO:0000304"/>
    <property type="project" value="Reactome"/>
</dbReference>
<dbReference type="GO" id="GO:0000287">
    <property type="term" value="F:magnesium ion binding"/>
    <property type="evidence" value="ECO:0000314"/>
    <property type="project" value="UniProtKB"/>
</dbReference>
<dbReference type="GO" id="GO:0051721">
    <property type="term" value="F:protein phosphatase 2A binding"/>
    <property type="evidence" value="ECO:0000353"/>
    <property type="project" value="BHF-UCL"/>
</dbReference>
<dbReference type="GO" id="GO:0008481">
    <property type="term" value="F:sphingosine kinase activity"/>
    <property type="evidence" value="ECO:0000314"/>
    <property type="project" value="UniProtKB"/>
</dbReference>
<dbReference type="GO" id="GO:0038036">
    <property type="term" value="F:sphingosine-1-phosphate receptor activity"/>
    <property type="evidence" value="ECO:0000315"/>
    <property type="project" value="UniProtKB"/>
</dbReference>
<dbReference type="GO" id="GO:0001568">
    <property type="term" value="P:blood vessel development"/>
    <property type="evidence" value="ECO:0007669"/>
    <property type="project" value="Ensembl"/>
</dbReference>
<dbReference type="GO" id="GO:0007420">
    <property type="term" value="P:brain development"/>
    <property type="evidence" value="ECO:0007669"/>
    <property type="project" value="Ensembl"/>
</dbReference>
<dbReference type="GO" id="GO:0019722">
    <property type="term" value="P:calcium-mediated signaling"/>
    <property type="evidence" value="ECO:0000314"/>
    <property type="project" value="UniProtKB"/>
</dbReference>
<dbReference type="GO" id="GO:0008283">
    <property type="term" value="P:cell population proliferation"/>
    <property type="evidence" value="ECO:0007669"/>
    <property type="project" value="Ensembl"/>
</dbReference>
<dbReference type="GO" id="GO:0071363">
    <property type="term" value="P:cellular response to growth factor stimulus"/>
    <property type="evidence" value="ECO:0000318"/>
    <property type="project" value="GO_Central"/>
</dbReference>
<dbReference type="GO" id="GO:0070301">
    <property type="term" value="P:cellular response to hydrogen peroxide"/>
    <property type="evidence" value="ECO:0007669"/>
    <property type="project" value="Ensembl"/>
</dbReference>
<dbReference type="GO" id="GO:0035924">
    <property type="term" value="P:cellular response to vascular endothelial growth factor stimulus"/>
    <property type="evidence" value="ECO:0000314"/>
    <property type="project" value="UniProtKB"/>
</dbReference>
<dbReference type="GO" id="GO:0071897">
    <property type="term" value="P:DNA biosynthetic process"/>
    <property type="evidence" value="ECO:0007669"/>
    <property type="project" value="Ensembl"/>
</dbReference>
<dbReference type="GO" id="GO:0006954">
    <property type="term" value="P:inflammatory response"/>
    <property type="evidence" value="ECO:0007669"/>
    <property type="project" value="Ensembl"/>
</dbReference>
<dbReference type="GO" id="GO:0035556">
    <property type="term" value="P:intracellular signal transduction"/>
    <property type="evidence" value="ECO:0000304"/>
    <property type="project" value="UniProtKB"/>
</dbReference>
<dbReference type="GO" id="GO:0043066">
    <property type="term" value="P:negative regulation of apoptotic process"/>
    <property type="evidence" value="ECO:0000314"/>
    <property type="project" value="MGI"/>
</dbReference>
<dbReference type="GO" id="GO:1900060">
    <property type="term" value="P:negative regulation of ceramide biosynthetic process"/>
    <property type="evidence" value="ECO:0000314"/>
    <property type="project" value="UniProtKB"/>
</dbReference>
<dbReference type="GO" id="GO:0045766">
    <property type="term" value="P:positive regulation of angiogenesis"/>
    <property type="evidence" value="ECO:0000314"/>
    <property type="project" value="UniProtKB"/>
</dbReference>
<dbReference type="GO" id="GO:0030307">
    <property type="term" value="P:positive regulation of cell growth"/>
    <property type="evidence" value="ECO:0000314"/>
    <property type="project" value="UniProtKB"/>
</dbReference>
<dbReference type="GO" id="GO:0030335">
    <property type="term" value="P:positive regulation of cell migration"/>
    <property type="evidence" value="ECO:0000314"/>
    <property type="project" value="UniProtKB"/>
</dbReference>
<dbReference type="GO" id="GO:0048146">
    <property type="term" value="P:positive regulation of fibroblast proliferation"/>
    <property type="evidence" value="ECO:0000314"/>
    <property type="project" value="MGI"/>
</dbReference>
<dbReference type="GO" id="GO:0032740">
    <property type="term" value="P:positive regulation of interleukin-17 production"/>
    <property type="evidence" value="ECO:0000250"/>
    <property type="project" value="UniProtKB"/>
</dbReference>
<dbReference type="GO" id="GO:0045931">
    <property type="term" value="P:positive regulation of mitotic cell cycle"/>
    <property type="evidence" value="ECO:0000314"/>
    <property type="project" value="UniProtKB"/>
</dbReference>
<dbReference type="GO" id="GO:0045840">
    <property type="term" value="P:positive regulation of mitotic nuclear division"/>
    <property type="evidence" value="ECO:0007669"/>
    <property type="project" value="Ensembl"/>
</dbReference>
<dbReference type="GO" id="GO:0051092">
    <property type="term" value="P:positive regulation of NF-kappaB transcription factor activity"/>
    <property type="evidence" value="ECO:0000315"/>
    <property type="project" value="UniProtKB"/>
</dbReference>
<dbReference type="GO" id="GO:1901224">
    <property type="term" value="P:positive regulation of non-canonical NF-kappaB signal transduction"/>
    <property type="evidence" value="ECO:0000315"/>
    <property type="project" value="UniProtKB"/>
</dbReference>
<dbReference type="GO" id="GO:1900745">
    <property type="term" value="P:positive regulation of p38MAPK cascade"/>
    <property type="evidence" value="ECO:0000314"/>
    <property type="project" value="UniProtKB"/>
</dbReference>
<dbReference type="GO" id="GO:0010800">
    <property type="term" value="P:positive regulation of peptidyl-threonine phosphorylation"/>
    <property type="evidence" value="ECO:0000315"/>
    <property type="project" value="UniProtKB"/>
</dbReference>
<dbReference type="GO" id="GO:0031398">
    <property type="term" value="P:positive regulation of protein ubiquitination"/>
    <property type="evidence" value="ECO:0000314"/>
    <property type="project" value="UniProtKB"/>
</dbReference>
<dbReference type="GO" id="GO:0045987">
    <property type="term" value="P:positive regulation of smooth muscle contraction"/>
    <property type="evidence" value="ECO:0000314"/>
    <property type="project" value="UniProtKB"/>
</dbReference>
<dbReference type="GO" id="GO:0006473">
    <property type="term" value="P:protein acetylation"/>
    <property type="evidence" value="ECO:0000250"/>
    <property type="project" value="UniProtKB"/>
</dbReference>
<dbReference type="GO" id="GO:0030100">
    <property type="term" value="P:regulation of endocytosis"/>
    <property type="evidence" value="ECO:0000314"/>
    <property type="project" value="UniProtKB"/>
</dbReference>
<dbReference type="GO" id="GO:1905364">
    <property type="term" value="P:regulation of endosomal vesicle fusion"/>
    <property type="evidence" value="ECO:0000250"/>
    <property type="project" value="UniProtKB"/>
</dbReference>
<dbReference type="GO" id="GO:0032651">
    <property type="term" value="P:regulation of interleukin-1 beta production"/>
    <property type="evidence" value="ECO:0007669"/>
    <property type="project" value="Ensembl"/>
</dbReference>
<dbReference type="GO" id="GO:1903978">
    <property type="term" value="P:regulation of microglial cell activation"/>
    <property type="evidence" value="ECO:0000250"/>
    <property type="project" value="UniProtKB"/>
</dbReference>
<dbReference type="GO" id="GO:0150077">
    <property type="term" value="P:regulation of neuroinflammatory response"/>
    <property type="evidence" value="ECO:0000250"/>
    <property type="project" value="UniProtKB"/>
</dbReference>
<dbReference type="GO" id="GO:0050764">
    <property type="term" value="P:regulation of phagocytosis"/>
    <property type="evidence" value="ECO:0000250"/>
    <property type="project" value="UniProtKB"/>
</dbReference>
<dbReference type="GO" id="GO:0010803">
    <property type="term" value="P:regulation of tumor necrosis factor-mediated signaling pathway"/>
    <property type="evidence" value="ECO:0000314"/>
    <property type="project" value="UniProtKB"/>
</dbReference>
<dbReference type="GO" id="GO:0034612">
    <property type="term" value="P:response to tumor necrosis factor"/>
    <property type="evidence" value="ECO:0000314"/>
    <property type="project" value="UniProtKB"/>
</dbReference>
<dbReference type="GO" id="GO:0046521">
    <property type="term" value="P:sphingoid catabolic process"/>
    <property type="evidence" value="ECO:0000303"/>
    <property type="project" value="UniProtKB"/>
</dbReference>
<dbReference type="GO" id="GO:0030148">
    <property type="term" value="P:sphingolipid biosynthetic process"/>
    <property type="evidence" value="ECO:0000304"/>
    <property type="project" value="Reactome"/>
</dbReference>
<dbReference type="GO" id="GO:0046512">
    <property type="term" value="P:sphingosine biosynthetic process"/>
    <property type="evidence" value="ECO:0000315"/>
    <property type="project" value="UniProtKB"/>
</dbReference>
<dbReference type="GO" id="GO:0006670">
    <property type="term" value="P:sphingosine metabolic process"/>
    <property type="evidence" value="ECO:0000314"/>
    <property type="project" value="UniProtKB"/>
</dbReference>
<dbReference type="FunFam" id="2.60.200.40:FF:000010">
    <property type="entry name" value="Sphingosine kinase 1"/>
    <property type="match status" value="1"/>
</dbReference>
<dbReference type="FunFam" id="3.40.50.10330:FF:000005">
    <property type="entry name" value="Sphingosine kinase 2"/>
    <property type="match status" value="1"/>
</dbReference>
<dbReference type="Gene3D" id="2.60.200.40">
    <property type="match status" value="1"/>
</dbReference>
<dbReference type="Gene3D" id="3.40.50.10330">
    <property type="entry name" value="Probable inorganic polyphosphate/atp-NAD kinase, domain 1"/>
    <property type="match status" value="1"/>
</dbReference>
<dbReference type="InterPro" id="IPR017438">
    <property type="entry name" value="ATP-NAD_kinase_N"/>
</dbReference>
<dbReference type="InterPro" id="IPR001206">
    <property type="entry name" value="Diacylglycerol_kinase_cat_dom"/>
</dbReference>
<dbReference type="InterPro" id="IPR050187">
    <property type="entry name" value="Lipid_Phosphate_FormReg"/>
</dbReference>
<dbReference type="InterPro" id="IPR016064">
    <property type="entry name" value="NAD/diacylglycerol_kinase_sf"/>
</dbReference>
<dbReference type="PANTHER" id="PTHR12358">
    <property type="entry name" value="SPHINGOSINE KINASE"/>
    <property type="match status" value="1"/>
</dbReference>
<dbReference type="PANTHER" id="PTHR12358:SF47">
    <property type="entry name" value="SPHINGOSINE KINASE 1"/>
    <property type="match status" value="1"/>
</dbReference>
<dbReference type="Pfam" id="PF00781">
    <property type="entry name" value="DAGK_cat"/>
    <property type="match status" value="1"/>
</dbReference>
<dbReference type="SMART" id="SM00046">
    <property type="entry name" value="DAGKc"/>
    <property type="match status" value="1"/>
</dbReference>
<dbReference type="SUPFAM" id="SSF111331">
    <property type="entry name" value="NAD kinase/diacylglycerol kinase-like"/>
    <property type="match status" value="1"/>
</dbReference>
<dbReference type="PROSITE" id="PS50146">
    <property type="entry name" value="DAGK"/>
    <property type="match status" value="1"/>
</dbReference>
<reference key="1">
    <citation type="journal article" date="2000" name="Gene">
        <title>Human sphingosine kinase: molecular cloning, functional characterization and tissue distribution.</title>
        <authorList>
            <person name="Melendez A.J."/>
            <person name="Carlos-Dias E."/>
            <person name="Gosink M."/>
            <person name="Allen J.M."/>
            <person name="Takacs L."/>
        </authorList>
    </citation>
    <scope>NUCLEOTIDE SEQUENCE [MRNA] (ISOFORM 1)</scope>
</reference>
<reference key="2">
    <citation type="journal article" date="2000" name="FEBS Lett.">
        <title>Functional characterization of human sphingosine kinase-1.</title>
        <authorList>
            <person name="Nava V.E."/>
            <person name="Lacana' E."/>
            <person name="Poulton S."/>
            <person name="Liu H."/>
            <person name="Sugiura M."/>
            <person name="Kono K."/>
            <person name="Milstien S."/>
            <person name="Kohama T."/>
            <person name="Spiegel S."/>
        </authorList>
    </citation>
    <scope>NUCLEOTIDE SEQUENCE [MRNA] (ISOFORM 1)</scope>
    <scope>CATALYTIC ACTIVITY</scope>
    <scope>SUBSTRATE SPECIFICITY</scope>
    <scope>TISSUE SPECIFICITY</scope>
</reference>
<reference key="3">
    <citation type="journal article" date="2000" name="Biochem. J.">
        <title>Human sphingosine kinase: purification, molecular cloning and characterization of the native and recombinant enzymes.</title>
        <authorList>
            <person name="Pitson S.M."/>
            <person name="D'Andrea R.J."/>
            <person name="Vandeleur L."/>
            <person name="Moretti P.A.B."/>
            <person name="Xia P."/>
            <person name="Gamble J.R."/>
            <person name="Vadas M.A."/>
            <person name="Wattenberg B.W."/>
        </authorList>
    </citation>
    <scope>NUCLEOTIDE SEQUENCE [MRNA] (ISOFORM 1)</scope>
    <scope>SUBSTRATE SPECIFICITY</scope>
    <scope>BIOPHYSICOCHEMICAL PROPERTIES</scope>
    <scope>COFACTOR</scope>
</reference>
<reference key="4">
    <citation type="submission" date="1999-08" db="EMBL/GenBank/DDBJ databases">
        <authorList>
            <person name="Van Veldhoven P.P."/>
            <person name="Gijsbers S."/>
        </authorList>
    </citation>
    <scope>NUCLEOTIDE SEQUENCE [MRNA] (ISOFORM 1)</scope>
</reference>
<reference key="5">
    <citation type="journal article" date="2004" name="Nat. Genet.">
        <title>Complete sequencing and characterization of 21,243 full-length human cDNAs.</title>
        <authorList>
            <person name="Ota T."/>
            <person name="Suzuki Y."/>
            <person name="Nishikawa T."/>
            <person name="Otsuki T."/>
            <person name="Sugiyama T."/>
            <person name="Irie R."/>
            <person name="Wakamatsu A."/>
            <person name="Hayashi K."/>
            <person name="Sato H."/>
            <person name="Nagai K."/>
            <person name="Kimura K."/>
            <person name="Makita H."/>
            <person name="Sekine M."/>
            <person name="Obayashi M."/>
            <person name="Nishi T."/>
            <person name="Shibahara T."/>
            <person name="Tanaka T."/>
            <person name="Ishii S."/>
            <person name="Yamamoto J."/>
            <person name="Saito K."/>
            <person name="Kawai Y."/>
            <person name="Isono Y."/>
            <person name="Nakamura Y."/>
            <person name="Nagahari K."/>
            <person name="Murakami K."/>
            <person name="Yasuda T."/>
            <person name="Iwayanagi T."/>
            <person name="Wagatsuma M."/>
            <person name="Shiratori A."/>
            <person name="Sudo H."/>
            <person name="Hosoiri T."/>
            <person name="Kaku Y."/>
            <person name="Kodaira H."/>
            <person name="Kondo H."/>
            <person name="Sugawara M."/>
            <person name="Takahashi M."/>
            <person name="Kanda K."/>
            <person name="Yokoi T."/>
            <person name="Furuya T."/>
            <person name="Kikkawa E."/>
            <person name="Omura Y."/>
            <person name="Abe K."/>
            <person name="Kamihara K."/>
            <person name="Katsuta N."/>
            <person name="Sato K."/>
            <person name="Tanikawa M."/>
            <person name="Yamazaki M."/>
            <person name="Ninomiya K."/>
            <person name="Ishibashi T."/>
            <person name="Yamashita H."/>
            <person name="Murakawa K."/>
            <person name="Fujimori K."/>
            <person name="Tanai H."/>
            <person name="Kimata M."/>
            <person name="Watanabe M."/>
            <person name="Hiraoka S."/>
            <person name="Chiba Y."/>
            <person name="Ishida S."/>
            <person name="Ono Y."/>
            <person name="Takiguchi S."/>
            <person name="Watanabe S."/>
            <person name="Yosida M."/>
            <person name="Hotuta T."/>
            <person name="Kusano J."/>
            <person name="Kanehori K."/>
            <person name="Takahashi-Fujii A."/>
            <person name="Hara H."/>
            <person name="Tanase T.-O."/>
            <person name="Nomura Y."/>
            <person name="Togiya S."/>
            <person name="Komai F."/>
            <person name="Hara R."/>
            <person name="Takeuchi K."/>
            <person name="Arita M."/>
            <person name="Imose N."/>
            <person name="Musashino K."/>
            <person name="Yuuki H."/>
            <person name="Oshima A."/>
            <person name="Sasaki N."/>
            <person name="Aotsuka S."/>
            <person name="Yoshikawa Y."/>
            <person name="Matsunawa H."/>
            <person name="Ichihara T."/>
            <person name="Shiohata N."/>
            <person name="Sano S."/>
            <person name="Moriya S."/>
            <person name="Momiyama H."/>
            <person name="Satoh N."/>
            <person name="Takami S."/>
            <person name="Terashima Y."/>
            <person name="Suzuki O."/>
            <person name="Nakagawa S."/>
            <person name="Senoh A."/>
            <person name="Mizoguchi H."/>
            <person name="Goto Y."/>
            <person name="Shimizu F."/>
            <person name="Wakebe H."/>
            <person name="Hishigaki H."/>
            <person name="Watanabe T."/>
            <person name="Sugiyama A."/>
            <person name="Takemoto M."/>
            <person name="Kawakami B."/>
            <person name="Yamazaki M."/>
            <person name="Watanabe K."/>
            <person name="Kumagai A."/>
            <person name="Itakura S."/>
            <person name="Fukuzumi Y."/>
            <person name="Fujimori Y."/>
            <person name="Komiyama M."/>
            <person name="Tashiro H."/>
            <person name="Tanigami A."/>
            <person name="Fujiwara T."/>
            <person name="Ono T."/>
            <person name="Yamada K."/>
            <person name="Fujii Y."/>
            <person name="Ozaki K."/>
            <person name="Hirao M."/>
            <person name="Ohmori Y."/>
            <person name="Kawabata A."/>
            <person name="Hikiji T."/>
            <person name="Kobatake N."/>
            <person name="Inagaki H."/>
            <person name="Ikema Y."/>
            <person name="Okamoto S."/>
            <person name="Okitani R."/>
            <person name="Kawakami T."/>
            <person name="Noguchi S."/>
            <person name="Itoh T."/>
            <person name="Shigeta K."/>
            <person name="Senba T."/>
            <person name="Matsumura K."/>
            <person name="Nakajima Y."/>
            <person name="Mizuno T."/>
            <person name="Morinaga M."/>
            <person name="Sasaki M."/>
            <person name="Togashi T."/>
            <person name="Oyama M."/>
            <person name="Hata H."/>
            <person name="Watanabe M."/>
            <person name="Komatsu T."/>
            <person name="Mizushima-Sugano J."/>
            <person name="Satoh T."/>
            <person name="Shirai Y."/>
            <person name="Takahashi Y."/>
            <person name="Nakagawa K."/>
            <person name="Okumura K."/>
            <person name="Nagase T."/>
            <person name="Nomura N."/>
            <person name="Kikuchi H."/>
            <person name="Masuho Y."/>
            <person name="Yamashita R."/>
            <person name="Nakai K."/>
            <person name="Yada T."/>
            <person name="Nakamura Y."/>
            <person name="Ohara O."/>
            <person name="Isogai T."/>
            <person name="Sugano S."/>
        </authorList>
    </citation>
    <scope>NUCLEOTIDE SEQUENCE [LARGE SCALE MRNA] (ISOFORMS 1 AND 2)</scope>
    <source>
        <tissue>Mammary gland</tissue>
        <tissue>Ovary</tissue>
        <tissue>Testis</tissue>
    </source>
</reference>
<reference key="6">
    <citation type="journal article" date="2006" name="Nature">
        <title>DNA sequence of human chromosome 17 and analysis of rearrangement in the human lineage.</title>
        <authorList>
            <person name="Zody M.C."/>
            <person name="Garber M."/>
            <person name="Adams D.J."/>
            <person name="Sharpe T."/>
            <person name="Harrow J."/>
            <person name="Lupski J.R."/>
            <person name="Nicholson C."/>
            <person name="Searle S.M."/>
            <person name="Wilming L."/>
            <person name="Young S.K."/>
            <person name="Abouelleil A."/>
            <person name="Allen N.R."/>
            <person name="Bi W."/>
            <person name="Bloom T."/>
            <person name="Borowsky M.L."/>
            <person name="Bugalter B.E."/>
            <person name="Butler J."/>
            <person name="Chang J.L."/>
            <person name="Chen C.-K."/>
            <person name="Cook A."/>
            <person name="Corum B."/>
            <person name="Cuomo C.A."/>
            <person name="de Jong P.J."/>
            <person name="DeCaprio D."/>
            <person name="Dewar K."/>
            <person name="FitzGerald M."/>
            <person name="Gilbert J."/>
            <person name="Gibson R."/>
            <person name="Gnerre S."/>
            <person name="Goldstein S."/>
            <person name="Grafham D.V."/>
            <person name="Grocock R."/>
            <person name="Hafez N."/>
            <person name="Hagopian D.S."/>
            <person name="Hart E."/>
            <person name="Norman C.H."/>
            <person name="Humphray S."/>
            <person name="Jaffe D.B."/>
            <person name="Jones M."/>
            <person name="Kamal M."/>
            <person name="Khodiyar V.K."/>
            <person name="LaButti K."/>
            <person name="Laird G."/>
            <person name="Lehoczky J."/>
            <person name="Liu X."/>
            <person name="Lokyitsang T."/>
            <person name="Loveland J."/>
            <person name="Lui A."/>
            <person name="Macdonald P."/>
            <person name="Major J.E."/>
            <person name="Matthews L."/>
            <person name="Mauceli E."/>
            <person name="McCarroll S.A."/>
            <person name="Mihalev A.H."/>
            <person name="Mudge J."/>
            <person name="Nguyen C."/>
            <person name="Nicol R."/>
            <person name="O'Leary S.B."/>
            <person name="Osoegawa K."/>
            <person name="Schwartz D.C."/>
            <person name="Shaw-Smith C."/>
            <person name="Stankiewicz P."/>
            <person name="Steward C."/>
            <person name="Swarbreck D."/>
            <person name="Venkataraman V."/>
            <person name="Whittaker C.A."/>
            <person name="Yang X."/>
            <person name="Zimmer A.R."/>
            <person name="Bradley A."/>
            <person name="Hubbard T."/>
            <person name="Birren B.W."/>
            <person name="Rogers J."/>
            <person name="Lander E.S."/>
            <person name="Nusbaum C."/>
        </authorList>
    </citation>
    <scope>NUCLEOTIDE SEQUENCE [LARGE SCALE GENOMIC DNA]</scope>
</reference>
<reference key="7">
    <citation type="submission" date="2005-07" db="EMBL/GenBank/DDBJ databases">
        <authorList>
            <person name="Mural R.J."/>
            <person name="Istrail S."/>
            <person name="Sutton G.G."/>
            <person name="Florea L."/>
            <person name="Halpern A.L."/>
            <person name="Mobarry C.M."/>
            <person name="Lippert R."/>
            <person name="Walenz B."/>
            <person name="Shatkay H."/>
            <person name="Dew I."/>
            <person name="Miller J.R."/>
            <person name="Flanigan M.J."/>
            <person name="Edwards N.J."/>
            <person name="Bolanos R."/>
            <person name="Fasulo D."/>
            <person name="Halldorsson B.V."/>
            <person name="Hannenhalli S."/>
            <person name="Turner R."/>
            <person name="Yooseph S."/>
            <person name="Lu F."/>
            <person name="Nusskern D.R."/>
            <person name="Shue B.C."/>
            <person name="Zheng X.H."/>
            <person name="Zhong F."/>
            <person name="Delcher A.L."/>
            <person name="Huson D.H."/>
            <person name="Kravitz S.A."/>
            <person name="Mouchard L."/>
            <person name="Reinert K."/>
            <person name="Remington K.A."/>
            <person name="Clark A.G."/>
            <person name="Waterman M.S."/>
            <person name="Eichler E.E."/>
            <person name="Adams M.D."/>
            <person name="Hunkapiller M.W."/>
            <person name="Myers E.W."/>
            <person name="Venter J.C."/>
        </authorList>
    </citation>
    <scope>NUCLEOTIDE SEQUENCE [LARGE SCALE GENOMIC DNA]</scope>
</reference>
<reference key="8">
    <citation type="journal article" date="2004" name="Genome Res.">
        <title>The status, quality, and expansion of the NIH full-length cDNA project: the Mammalian Gene Collection (MGC).</title>
        <authorList>
            <consortium name="The MGC Project Team"/>
        </authorList>
    </citation>
    <scope>NUCLEOTIDE SEQUENCE [LARGE SCALE MRNA] (ISOFORMS 2 AND 3)</scope>
    <source>
        <tissue>Blood</tissue>
        <tissue>Kidney</tissue>
        <tissue>Skin</tissue>
    </source>
</reference>
<reference key="9">
    <citation type="journal article" date="2002" name="Biochim. Biophys. Acta">
        <title>1-O-Hexadecyl-2-desoxy-2-amino-sn-glycerol, a substrate for human sphingosine kinase.</title>
        <authorList>
            <person name="Gijsbers S."/>
            <person name="Asselberghs S."/>
            <person name="Herdewijn P."/>
            <person name="Van Veldhoven P.P."/>
        </authorList>
    </citation>
    <scope>FUNCTION</scope>
    <scope>CATALYTIC ACTIVITY</scope>
    <scope>SUBSTRATE SPECIFICITY</scope>
    <scope>BIOPHYSICOCHEMICAL PROPERTIES</scope>
</reference>
<reference key="10">
    <citation type="journal article" date="2002" name="J. Biol. Chem.">
        <title>Cloning and characterization of a protein kinase A anchoring protein (AKAP)-related protein that interacts with and regulates sphingosine kinase 1 activity.</title>
        <authorList>
            <person name="Lacana E."/>
            <person name="Maceyka M."/>
            <person name="Milstien S."/>
            <person name="Spiegel S."/>
        </authorList>
    </citation>
    <scope>INTERACTION WITH SPHKAP</scope>
</reference>
<reference key="11">
    <citation type="journal article" date="2003" name="Biochem. Biophys. Res. Commun.">
        <title>Identification of functional nuclear export sequences in human sphingosine kinase 1.</title>
        <authorList>
            <person name="Inagaki Y."/>
            <person name="Li P.Y."/>
            <person name="Wada A."/>
            <person name="Mitsutake S."/>
            <person name="Igarashi Y."/>
        </authorList>
    </citation>
    <scope>SUBCELLULAR LOCATION</scope>
    <scope>NUCLEAR EXPORT SIGNALS</scope>
</reference>
<reference key="12">
    <citation type="journal article" date="2005" name="J. Biol. Chem.">
        <title>SphK1 and SphK2, sphingosine kinase isoenzymes with opposing functions in sphingolipid metabolism.</title>
        <authorList>
            <person name="Maceyka M."/>
            <person name="Sankala H."/>
            <person name="Hait N.C."/>
            <person name="Le Stunff H."/>
            <person name="Liu H."/>
            <person name="Toman R."/>
            <person name="Collier C."/>
            <person name="Zhang M."/>
            <person name="Satin L.S."/>
            <person name="Merrill A.H. Jr."/>
            <person name="Milstien S."/>
            <person name="Spiegel S."/>
        </authorList>
    </citation>
    <scope>FUNCTION</scope>
</reference>
<reference key="13">
    <citation type="journal article" date="2008" name="J. Biol. Chem.">
        <title>Eukaryotic elongation factor 1A interacts with sphingosine kinase and directly enhances its catalytic activity.</title>
        <authorList>
            <person name="Leclercq T.M."/>
            <person name="Moretti P.A."/>
            <person name="Vadas M.A."/>
            <person name="Pitson S.M."/>
        </authorList>
    </citation>
    <scope>INTERACTION WITH EEF1A1</scope>
    <scope>BIOPHYSICOCHEMICAL PROPERTIES</scope>
</reference>
<reference key="14">
    <citation type="journal article" date="2008" name="Proc. Natl. Acad. Sci. U.S.A.">
        <title>A quantitative atlas of mitotic phosphorylation.</title>
        <authorList>
            <person name="Dephoure N."/>
            <person name="Zhou C."/>
            <person name="Villen J."/>
            <person name="Beausoleil S.A."/>
            <person name="Bakalarski C.E."/>
            <person name="Elledge S.J."/>
            <person name="Gygi S.P."/>
        </authorList>
    </citation>
    <scope>PHOSPHORYLATION [LARGE SCALE ANALYSIS] AT THR-193</scope>
    <scope>IDENTIFICATION BY MASS SPECTROMETRY [LARGE SCALE ANALYSIS]</scope>
    <source>
        <tissue>Cervix carcinoma</tissue>
    </source>
</reference>
<reference key="15">
    <citation type="journal article" date="2010" name="J. Biol. Chem.">
        <title>Translocation of sphingosine kinase 1 to the plasma membrane is mediated by calcium- and integrin-binding protein 1.</title>
        <authorList>
            <person name="Jarman K.E."/>
            <person name="Moretti P.A."/>
            <person name="Zebol J.R."/>
            <person name="Pitson S.M."/>
        </authorList>
    </citation>
    <scope>INTERACTION WITH CIB1</scope>
    <scope>SUBCELLULAR LOCATION</scope>
    <scope>MUTAGENESIS OF 197-PHE-LEU-198</scope>
</reference>
<reference key="16">
    <citation type="journal article" date="2010" name="Nature">
        <title>Sphingosine-1-phosphate is a missing cofactor for the E3 ubiquitin ligase TRAF2.</title>
        <authorList>
            <person name="Alvarez S.E."/>
            <person name="Harikumar K.B."/>
            <person name="Hait N.C."/>
            <person name="Allegood J."/>
            <person name="Strub G.M."/>
            <person name="Kim E.Y."/>
            <person name="Maceyka M."/>
            <person name="Jiang H."/>
            <person name="Luo C."/>
            <person name="Kordula T."/>
            <person name="Milstien S."/>
            <person name="Spiegel S."/>
        </authorList>
    </citation>
    <scope>CATALYTIC ACTIVITY</scope>
    <scope>FUNCTION</scope>
    <scope>INTERACTION WITH TRAF2</scope>
    <scope>MUTAGENESIS OF GLY-82</scope>
    <scope>PHOSPHORYLATION AT SER-225</scope>
</reference>
<reference key="17">
    <citation type="journal article" date="2013" name="J. Biol. Chem.">
        <title>Sphingosine kinase 1 regulates tumor necrosis factor-mediated RANTES induction through p38 mitogen-activated protein kinase but independently of nuclear factor kappaB activation.</title>
        <authorList>
            <person name="Adada M.M."/>
            <person name="Orr-Gandy K.A."/>
            <person name="Snider A.J."/>
            <person name="Canals D."/>
            <person name="Hannun Y.A."/>
            <person name="Obeid L.M."/>
            <person name="Clarke C.J."/>
        </authorList>
    </citation>
    <scope>FUNCTION</scope>
</reference>
<reference key="18">
    <citation type="journal article" date="2014" name="Nat. Cell Biol.">
        <title>Coupling between endocytosis and sphingosine kinase 1 recruitment.</title>
        <authorList>
            <person name="Shen H."/>
            <person name="Giordano F."/>
            <person name="Wu Y."/>
            <person name="Chan J."/>
            <person name="Zhu C."/>
            <person name="Milosevic I."/>
            <person name="Wu X."/>
            <person name="Yao K."/>
            <person name="Chen B."/>
            <person name="Baumgart T."/>
            <person name="Sieburth D."/>
            <person name="De Camilli P."/>
        </authorList>
    </citation>
    <scope>FUNCTION</scope>
    <scope>SUBCELLULAR LOCATION</scope>
    <scope>CATALYTIC ACTIVITY</scope>
    <scope>MUTAGENESIS OF LEU-194 AND 197-PHE-LEU-198</scope>
</reference>
<reference key="19">
    <citation type="journal article" date="2014" name="Nat. Commun.">
        <title>Pathological roles of the VEGF/SphK pathway in Niemann-Pick type C neurons.</title>
        <authorList>
            <person name="Lee H."/>
            <person name="Lee J.K."/>
            <person name="Park M.H."/>
            <person name="Hong Y.R."/>
            <person name="Marti H.H."/>
            <person name="Kim H."/>
            <person name="Okada Y."/>
            <person name="Otsu M."/>
            <person name="Seo E.J."/>
            <person name="Park J.H."/>
            <person name="Bae J.H."/>
            <person name="Okino N."/>
            <person name="He X."/>
            <person name="Schuchman E.H."/>
            <person name="Bae J.S."/>
            <person name="Jin H.K."/>
        </authorList>
    </citation>
    <scope>FUNCTION</scope>
    <scope>ACTIVITY REGULATION</scope>
    <scope>CATALYTIC ACTIVITY</scope>
</reference>
<reference key="20">
    <citation type="journal article" date="2017" name="J. Biol. Chem.">
        <title>Sphingosine and Sphingosine Kinase 1 Involvement in Endocytic Membrane Trafficking.</title>
        <authorList>
            <person name="Lima S."/>
            <person name="Milstien S."/>
            <person name="Spiegel S."/>
        </authorList>
    </citation>
    <scope>FUNCTION</scope>
</reference>
<reference key="21">
    <citation type="journal article" date="2018" name="Nat. Commun.">
        <title>Neuronal SphK1 acetylates COX2 and contributes to pathogenesis in a model of Alzheimer's Disease.</title>
        <authorList>
            <person name="Lee J.Y."/>
            <person name="Han S.H."/>
            <person name="Park M.H."/>
            <person name="Baek B."/>
            <person name="Song I.S."/>
            <person name="Choi M.K."/>
            <person name="Takuwa Y."/>
            <person name="Ryu H."/>
            <person name="Kim S.H."/>
            <person name="He X."/>
            <person name="Schuchman E.H."/>
            <person name="Bae J.S."/>
            <person name="Jin H.K."/>
        </authorList>
    </citation>
    <scope>TISSUE SPECIFICITY</scope>
    <scope>SUBCELLULAR LOCATION</scope>
    <scope>FUNCTION</scope>
</reference>
<reference key="22">
    <citation type="journal article" date="2013" name="Structure">
        <title>Molecular basis of sphingosine kinase 1 substrate recognition and catalysis.</title>
        <authorList>
            <person name="Wang Z."/>
            <person name="Min X."/>
            <person name="Xiao S.H."/>
            <person name="Johnstone S."/>
            <person name="Romanow W."/>
            <person name="Meininger D."/>
            <person name="Xu H."/>
            <person name="Liu J."/>
            <person name="Dai J."/>
            <person name="An S."/>
            <person name="Thibault S."/>
            <person name="Walker N."/>
        </authorList>
    </citation>
    <scope>X-RAY CRYSTALLOGRAPHY (2.0 ANGSTROMS) OF 9-364 IN COMPLEXES WITH SUBSTRATE ANALOGS AND ADP</scope>
    <scope>CATALYTIC ACTIVITY</scope>
    <scope>FUNCTION</scope>
    <scope>ACTIVE SITE</scope>
    <scope>MUTAGENESIS OF ASP-81</scope>
    <scope>SUBSTRATE-BINDING REGION</scope>
</reference>
<evidence type="ECO:0000250" key="1">
    <source>
        <dbReference type="UniProtKB" id="Q8CI15"/>
    </source>
</evidence>
<evidence type="ECO:0000250" key="2">
    <source>
        <dbReference type="UniProtKB" id="Q91V26"/>
    </source>
</evidence>
<evidence type="ECO:0000255" key="3">
    <source>
        <dbReference type="PROSITE-ProRule" id="PRU00783"/>
    </source>
</evidence>
<evidence type="ECO:0000269" key="4">
    <source>
    </source>
</evidence>
<evidence type="ECO:0000269" key="5">
    <source>
    </source>
</evidence>
<evidence type="ECO:0000269" key="6">
    <source>
    </source>
</evidence>
<evidence type="ECO:0000269" key="7">
    <source>
    </source>
</evidence>
<evidence type="ECO:0000269" key="8">
    <source>
    </source>
</evidence>
<evidence type="ECO:0000269" key="9">
    <source>
    </source>
</evidence>
<evidence type="ECO:0000269" key="10">
    <source>
    </source>
</evidence>
<evidence type="ECO:0000269" key="11">
    <source>
    </source>
</evidence>
<evidence type="ECO:0000269" key="12">
    <source>
    </source>
</evidence>
<evidence type="ECO:0000269" key="13">
    <source>
    </source>
</evidence>
<evidence type="ECO:0000269" key="14">
    <source>
    </source>
</evidence>
<evidence type="ECO:0000269" key="15">
    <source>
    </source>
</evidence>
<evidence type="ECO:0000269" key="16">
    <source>
    </source>
</evidence>
<evidence type="ECO:0000269" key="17">
    <source>
    </source>
</evidence>
<evidence type="ECO:0000269" key="18">
    <source>
    </source>
</evidence>
<evidence type="ECO:0000303" key="19">
    <source>
    </source>
</evidence>
<evidence type="ECO:0000303" key="20">
    <source>
    </source>
</evidence>
<evidence type="ECO:0000303" key="21">
    <source>
    </source>
</evidence>
<evidence type="ECO:0000305" key="22"/>
<evidence type="ECO:0000312" key="23">
    <source>
        <dbReference type="HGNC" id="HGNC:11240"/>
    </source>
</evidence>
<evidence type="ECO:0007744" key="24">
    <source>
    </source>
</evidence>
<evidence type="ECO:0007829" key="25">
    <source>
        <dbReference type="PDB" id="3VZB"/>
    </source>
</evidence>
<evidence type="ECO:0007829" key="26">
    <source>
        <dbReference type="PDB" id="4V24"/>
    </source>
</evidence>
<proteinExistence type="evidence at protein level"/>
<protein>
    <recommendedName>
        <fullName evidence="22">Sphingosine kinase 1</fullName>
        <shortName evidence="21">SK 1</shortName>
        <shortName>SPK 1</shortName>
        <ecNumber evidence="4 12 13 15">2.7.1.91</ecNumber>
    </recommendedName>
    <alternativeName>
        <fullName>Acetyltransferase SPHK1</fullName>
        <ecNumber>2.3.1.-</ecNumber>
    </alternativeName>
</protein>
<sequence>MDPAGGPRGVLPRPCRVLVLLNPRGGKGKALQLFRSHVQPLLAEAEISFTLMLTERRNHARELVRSEELGRWDALVVMSGDGLMHEVVNGLMERPDWETAIQKPLCSLPAGSGNALAASLNHYAGYEQVTNEDLLTNCTLLLCRRLLSPMNLLSLHTASGLRLFSVLSLAWGFIADVDLESEKYRRLGEMRFTLGTFLRLAALRTYRGRLAYLPVGRVGSKTPASPVVVQQGPVDAHLVPLEEPVPSHWTVVPDEDFVLVLALLHSHLGSEMFAAPMGRCAAGVMHLFYVRAGVSRAMLLRLFLAMEKGRHMEYECPYLVYVPVVAFRLEPKDGKGVFAVDGELMVSEAVQGQVHPNYFWMVSGCVEPPPSWKPQQMPPPEEPL</sequence>
<keyword id="KW-0002">3D-structure</keyword>
<keyword id="KW-0025">Alternative splicing</keyword>
<keyword id="KW-0067">ATP-binding</keyword>
<keyword id="KW-0112">Calmodulin-binding</keyword>
<keyword id="KW-1003">Cell membrane</keyword>
<keyword id="KW-0168">Coated pit</keyword>
<keyword id="KW-0963">Cytoplasm</keyword>
<keyword id="KW-0967">Endosome</keyword>
<keyword id="KW-0418">Kinase</keyword>
<keyword id="KW-0443">Lipid metabolism</keyword>
<keyword id="KW-0472">Membrane</keyword>
<keyword id="KW-0547">Nucleotide-binding</keyword>
<keyword id="KW-0539">Nucleus</keyword>
<keyword id="KW-0597">Phosphoprotein</keyword>
<keyword id="KW-1267">Proteomics identification</keyword>
<keyword id="KW-1185">Reference proteome</keyword>
<keyword id="KW-0770">Synapse</keyword>
<keyword id="KW-0808">Transferase</keyword>
<organism>
    <name type="scientific">Homo sapiens</name>
    <name type="common">Human</name>
    <dbReference type="NCBI Taxonomy" id="9606"/>
    <lineage>
        <taxon>Eukaryota</taxon>
        <taxon>Metazoa</taxon>
        <taxon>Chordata</taxon>
        <taxon>Craniata</taxon>
        <taxon>Vertebrata</taxon>
        <taxon>Euteleostomi</taxon>
        <taxon>Mammalia</taxon>
        <taxon>Eutheria</taxon>
        <taxon>Euarchontoglires</taxon>
        <taxon>Primates</taxon>
        <taxon>Haplorrhini</taxon>
        <taxon>Catarrhini</taxon>
        <taxon>Hominidae</taxon>
        <taxon>Homo</taxon>
    </lineage>
</organism>
<accession>Q9NYA1</accession>
<accession>Q8N632</accession>
<accession>Q96GK1</accession>
<accession>Q9HD92</accession>
<accession>Q9NY70</accession>
<accession>Q9NYL3</accession>
<gene>
    <name evidence="23" type="primary">SPHK1</name>
    <name evidence="21" type="synonym">SK1</name>
    <name type="synonym">SPHK</name>
    <name type="synonym">SPK</name>
</gene>
<name>SPHK1_HUMAN</name>
<comment type="function">
    <text evidence="6 9 12 13 14 15 16 17 18">Catalyzes the phosphorylation of sphingosine to form sphingosine 1-phosphate (SPP), a lipid mediator with both intra- and extracellular functions. Also acts on D-erythro-sphingosine and to a lesser extent sphinganine, but not other lipids, such as D,L-threo-dihydrosphingosine, N,N-dimethylsphingosine, diacylglycerol, ceramide, or phosphatidylinositol (PubMed:11923095, PubMed:20577214, PubMed:23602659, PubMed:24929359, PubMed:29662056). In contrast to proapoptotic SPHK2, has a negative effect on intracellular ceramide levels, enhances cell growth and inhibits apoptosis (PubMed:16118219). Involved in the regulation of inflammatory response and neuroinflammation. Via the product sphingosine 1-phosphate, stimulates TRAF2 E3 ubiquitin ligase activity, and promotes activation of NF-kappa-B in response to TNF signaling leading to IL17 secretion (PubMed:20577214). In response to TNF and in parallel to NF-kappa-B activation, negatively regulates RANTES induction through p38 MAPK signaling pathway (PubMed:23935096). Involved in endocytic membrane trafficking induced by sphingosine, recruited to dilate endosomes, also plays a role on later stages of endosomal maturation and membrane fusion independently of its kinase activity (PubMed:24929359, PubMed:28049734). In Purkinje cells, seems to be also involved in the regulation of autophagosome-lysosome fusion upon VEGFA (PubMed:25417698).</text>
</comment>
<comment type="function">
    <text evidence="1">Has serine acetyltransferase activity on PTGS2/COX2 in an acetyl-CoA dependent manner. The acetyltransferase activity increases in presence of the kinase substrate, sphingosine. During neuroinflammation, through PTGS2 acetylation, promotes neuronal secretion of specialized preresolving mediators (SPMs), especially 15-R-lipoxin A4, which results in an increase of phagocytic microglia.</text>
</comment>
<comment type="catalytic activity">
    <reaction evidence="4 12 13 15 16">
        <text>a sphingoid base + ATP = a sphingoid 1-phosphate + ADP + H(+)</text>
        <dbReference type="Rhea" id="RHEA:51496"/>
        <dbReference type="ChEBI" id="CHEBI:15378"/>
        <dbReference type="ChEBI" id="CHEBI:30616"/>
        <dbReference type="ChEBI" id="CHEBI:76941"/>
        <dbReference type="ChEBI" id="CHEBI:84410"/>
        <dbReference type="ChEBI" id="CHEBI:456216"/>
        <dbReference type="EC" id="2.7.1.91"/>
    </reaction>
    <physiologicalReaction direction="left-to-right" evidence="15 16">
        <dbReference type="Rhea" id="RHEA:51497"/>
    </physiologicalReaction>
</comment>
<comment type="catalytic activity">
    <reaction evidence="1">
        <text>L-seryl-[protein] + acetyl-CoA = O-acetyl-L-seryl-[protein] + CoA</text>
        <dbReference type="Rhea" id="RHEA:59392"/>
        <dbReference type="Rhea" id="RHEA-COMP:9863"/>
        <dbReference type="Rhea" id="RHEA-COMP:15352"/>
        <dbReference type="ChEBI" id="CHEBI:29999"/>
        <dbReference type="ChEBI" id="CHEBI:57287"/>
        <dbReference type="ChEBI" id="CHEBI:57288"/>
        <dbReference type="ChEBI" id="CHEBI:141128"/>
    </reaction>
    <physiologicalReaction direction="left-to-right" evidence="1">
        <dbReference type="Rhea" id="RHEA:59393"/>
    </physiologicalReaction>
</comment>
<comment type="catalytic activity">
    <reaction evidence="4 6">
        <text>sphinganine + ATP = sphinganine 1-phosphate + ADP + H(+)</text>
        <dbReference type="Rhea" id="RHEA:15465"/>
        <dbReference type="ChEBI" id="CHEBI:15378"/>
        <dbReference type="ChEBI" id="CHEBI:30616"/>
        <dbReference type="ChEBI" id="CHEBI:57817"/>
        <dbReference type="ChEBI" id="CHEBI:57939"/>
        <dbReference type="ChEBI" id="CHEBI:456216"/>
        <dbReference type="EC" id="2.7.1.91"/>
    </reaction>
    <physiologicalReaction direction="left-to-right" evidence="4 6">
        <dbReference type="Rhea" id="RHEA:15466"/>
    </physiologicalReaction>
</comment>
<comment type="catalytic activity">
    <reaction evidence="4 6">
        <text>sphing-4-enine + ATP = sphing-4-enine 1-phosphate + ADP + H(+)</text>
        <dbReference type="Rhea" id="RHEA:35847"/>
        <dbReference type="ChEBI" id="CHEBI:15378"/>
        <dbReference type="ChEBI" id="CHEBI:30616"/>
        <dbReference type="ChEBI" id="CHEBI:57756"/>
        <dbReference type="ChEBI" id="CHEBI:60119"/>
        <dbReference type="ChEBI" id="CHEBI:456216"/>
        <dbReference type="EC" id="2.7.1.91"/>
    </reaction>
    <physiologicalReaction direction="left-to-right" evidence="4 6">
        <dbReference type="Rhea" id="RHEA:35848"/>
    </physiologicalReaction>
</comment>
<comment type="catalytic activity">
    <reaction evidence="6">
        <text>1-O-hexadecyl-2-amino-sn-glycerol + ATP = 1-O-hexadecyl-2-desoxy-2-amino-sn-glycero-3-phosphate + ADP + H(+)</text>
        <dbReference type="Rhea" id="RHEA:41163"/>
        <dbReference type="ChEBI" id="CHEBI:15378"/>
        <dbReference type="ChEBI" id="CHEBI:30616"/>
        <dbReference type="ChEBI" id="CHEBI:77786"/>
        <dbReference type="ChEBI" id="CHEBI:77787"/>
        <dbReference type="ChEBI" id="CHEBI:456216"/>
    </reaction>
    <physiologicalReaction direction="left-to-right" evidence="6">
        <dbReference type="Rhea" id="RHEA:41164"/>
    </physiologicalReaction>
</comment>
<comment type="cofactor">
    <cofactor evidence="5">
        <name>Mg(2+)</name>
        <dbReference type="ChEBI" id="CHEBI:18420"/>
    </cofactor>
</comment>
<comment type="activity regulation">
    <text evidence="1 2 16">Acetyltransferase activity increases in presence of the kinase substrate, sphingosine (By similarity). In Purkinje cells, kinase activity on sphingosine increases in presence of VEGFA (PubMed:25417698). In neurons, kinase activity increases during the first 24h in presence of Amyloid-beta protein 42 to decrease after 96h (By similarity).</text>
</comment>
<comment type="biophysicochemical properties">
    <kinetics>
        <KM evidence="5">14 uM for sphingosine</KM>
        <KM evidence="5">20 uM for dihydrosphingosine</KM>
        <KM evidence="5">77 uM for ATP</KM>
        <KM evidence="6">3.8 uM for 1-O-hexadecyl-2-amino-sn-glycerol</KM>
        <KM evidence="6">15.7 uM for sphing-4-enine</KM>
        <KM evidence="6">46 uM for sphinganine</KM>
        <KM evidence="10">24 uM for sphingosine</KM>
        <KM evidence="10">89 uM for ATP</KM>
        <text evidence="10">kcat is 124 sec(-1) for sphingosine and increases to 304 sec(-1) upon interaction with EEF1A1.</text>
    </kinetics>
    <phDependence>
        <text evidence="5">Optimum pH is 7.4.</text>
    </phDependence>
</comment>
<comment type="subunit">
    <text evidence="1 7 10 11 12">Interacts with ACY1 (By similarity). Binds to calmodulin. Interacts with SPHKAP (PubMed:12080051). Interacts with CIB1, the interaction occurs in a calcium-dependent manner (PubMed:19854831). Interacts with TRAF2 (PubMed:20577214). Interacts with EEF1A1; the interaction enhances SPHK1 kinase activity (PubMed:18263879).</text>
</comment>
<comment type="interaction">
    <interactant intactId="EBI-985303">
        <id>Q9NYA1</id>
    </interactant>
    <interactant intactId="EBI-715062">
        <id>P07858</id>
        <label>CTSB</label>
    </interactant>
    <organismsDiffer>false</organismsDiffer>
    <experiments>4</experiments>
</comment>
<comment type="interaction">
    <interactant intactId="EBI-985303">
        <id>Q9NYA1</id>
    </interactant>
    <interactant intactId="EBI-352162">
        <id>P68104</id>
        <label>EEF1A1</label>
    </interactant>
    <organismsDiffer>false</organismsDiffer>
    <experiments>2</experiments>
</comment>
<comment type="interaction">
    <interactant intactId="EBI-985303">
        <id>Q9NYA1</id>
    </interactant>
    <interactant intactId="EBI-701903">
        <id>Q14192</id>
        <label>FHL2</label>
    </interactant>
    <organismsDiffer>false</organismsDiffer>
    <experiments>7</experiments>
</comment>
<comment type="interaction">
    <interactant intactId="EBI-985303">
        <id>Q9NYA1</id>
    </interactant>
    <interactant intactId="EBI-1803914">
        <id>Q2M3C7</id>
        <label>SPHKAP</label>
    </interactant>
    <organismsDiffer>false</organismsDiffer>
    <experiments>4</experiments>
</comment>
<comment type="interaction">
    <interactant intactId="EBI-985303">
        <id>Q9NYA1</id>
    </interactant>
    <interactant intactId="EBI-359276">
        <id>Q9Y4K3</id>
        <label>TRAF6</label>
    </interactant>
    <organismsDiffer>false</organismsDiffer>
    <experiments>2</experiments>
</comment>
<comment type="interaction">
    <interactant intactId="EBI-12512419">
        <id>Q9NYA1-2</id>
    </interactant>
    <interactant intactId="EBI-21591415">
        <id>P13473-2</id>
        <label>LAMP2</label>
    </interactant>
    <organismsDiffer>false</organismsDiffer>
    <experiments>3</experiments>
</comment>
<comment type="interaction">
    <interactant intactId="EBI-12512419">
        <id>Q9NYA1-2</id>
    </interactant>
    <interactant intactId="EBI-2623095">
        <id>Q9Y371</id>
        <label>SH3GLB1</label>
    </interactant>
    <organismsDiffer>false</organismsDiffer>
    <experiments>3</experiments>
</comment>
<comment type="subcellular location">
    <subcellularLocation>
        <location evidence="8 11 18">Cytoplasm</location>
    </subcellularLocation>
    <subcellularLocation>
        <location evidence="8 11 18">Nucleus</location>
    </subcellularLocation>
    <subcellularLocation>
        <location evidence="11">Cell membrane</location>
    </subcellularLocation>
    <subcellularLocation>
        <location evidence="15">Endosome membrane</location>
        <topology evidence="15">Peripheral membrane protein</topology>
    </subcellularLocation>
    <subcellularLocation>
        <location evidence="15">Membrane</location>
        <location evidence="15">Clathrin-coated pit</location>
    </subcellularLocation>
    <subcellularLocation>
        <location evidence="1">Synapse</location>
    </subcellularLocation>
    <text evidence="1 11 15">Translocated from the cytoplasm to the plasma membrane in a CIB1-dependent manner (PubMed:19854831). Binds to membranes containing negatively charged lipids but not neutral lipids (PubMed:24929359). Recruited to endocytic membranes by sphingosine where promotes membrane fusion (By similarity).</text>
</comment>
<comment type="alternative products">
    <event type="alternative splicing"/>
    <isoform>
        <id>Q9NYA1-1</id>
        <name>1</name>
        <sequence type="displayed"/>
    </isoform>
    <isoform>
        <id>Q9NYA1-2</id>
        <name>2</name>
        <sequence type="described" ref="VSP_035453"/>
    </isoform>
    <isoform>
        <id>Q9NYA1-3</id>
        <name>3</name>
        <sequence type="described" ref="VSP_047078"/>
    </isoform>
</comment>
<comment type="tissue specificity">
    <text evidence="4 18">Widely expressed with highest levels in adult liver, kidney, heart and skeletal muscle. Expressed in brain cortex (at protein level) (PubMed:29662056).</text>
</comment>